<keyword id="KW-0067">ATP-binding</keyword>
<keyword id="KW-0418">Kinase</keyword>
<keyword id="KW-0547">Nucleotide-binding</keyword>
<keyword id="KW-1267">Proteomics identification</keyword>
<keyword id="KW-1185">Reference proteome</keyword>
<keyword id="KW-0723">Serine/threonine-protein kinase</keyword>
<keyword id="KW-0808">Transferase</keyword>
<evidence type="ECO:0000255" key="1">
    <source>
        <dbReference type="PROSITE-ProRule" id="PRU00159"/>
    </source>
</evidence>
<evidence type="ECO:0000255" key="2">
    <source>
        <dbReference type="PROSITE-ProRule" id="PRU10027"/>
    </source>
</evidence>
<evidence type="ECO:0000256" key="3">
    <source>
        <dbReference type="SAM" id="MobiDB-lite"/>
    </source>
</evidence>
<protein>
    <recommendedName>
        <fullName>Uncharacterized serine/threonine-protein kinase SBK3</fullName>
        <ecNumber>2.7.11.1</ecNumber>
    </recommendedName>
    <alternativeName>
        <fullName>SH3 domain-binding kinase family member 3</fullName>
    </alternativeName>
    <alternativeName>
        <fullName>Sugen kinase 110</fullName>
    </alternativeName>
</protein>
<dbReference type="EC" id="2.7.11.1"/>
<dbReference type="EMBL" id="AC008735">
    <property type="status" value="NOT_ANNOTATED_CDS"/>
    <property type="molecule type" value="Genomic_DNA"/>
</dbReference>
<dbReference type="CCDS" id="CCDS74457.1"/>
<dbReference type="RefSeq" id="NP_001186753.1">
    <property type="nucleotide sequence ID" value="NM_001199824.2"/>
</dbReference>
<dbReference type="SMR" id="P0C264"/>
<dbReference type="BioGRID" id="934928">
    <property type="interactions" value="13"/>
</dbReference>
<dbReference type="FunCoup" id="P0C264">
    <property type="interactions" value="20"/>
</dbReference>
<dbReference type="IntAct" id="P0C264">
    <property type="interactions" value="12"/>
</dbReference>
<dbReference type="STRING" id="9606.ENSP00000483467"/>
<dbReference type="BindingDB" id="P0C264"/>
<dbReference type="ChEMBL" id="CHEMBL5116"/>
<dbReference type="DrugBank" id="DB12010">
    <property type="generic name" value="Fostamatinib"/>
</dbReference>
<dbReference type="DrugCentral" id="P0C264"/>
<dbReference type="GlyGen" id="P0C264">
    <property type="glycosylation" value="1 site"/>
</dbReference>
<dbReference type="iPTMnet" id="P0C264"/>
<dbReference type="PhosphoSitePlus" id="P0C264"/>
<dbReference type="BioMuta" id="SBK3"/>
<dbReference type="DMDM" id="161783904"/>
<dbReference type="jPOST" id="P0C264"/>
<dbReference type="MassIVE" id="P0C264"/>
<dbReference type="PaxDb" id="9606-ENSP00000483467"/>
<dbReference type="PeptideAtlas" id="P0C264"/>
<dbReference type="Antibodypedia" id="70937">
    <property type="antibodies" value="19 antibodies from 7 providers"/>
</dbReference>
<dbReference type="DNASU" id="100130827"/>
<dbReference type="Ensembl" id="ENST00000612221.1">
    <property type="protein sequence ID" value="ENSP00000483467.1"/>
    <property type="gene ID" value="ENSG00000231274.5"/>
</dbReference>
<dbReference type="GeneID" id="100130827"/>
<dbReference type="KEGG" id="hsa:100130827"/>
<dbReference type="MANE-Select" id="ENST00000612221.1">
    <property type="protein sequence ID" value="ENSP00000483467.1"/>
    <property type="RefSeq nucleotide sequence ID" value="NM_001199824.2"/>
    <property type="RefSeq protein sequence ID" value="NP_001186753.1"/>
</dbReference>
<dbReference type="UCSC" id="uc032ifx.1">
    <property type="organism name" value="human"/>
</dbReference>
<dbReference type="AGR" id="HGNC:44121"/>
<dbReference type="CTD" id="100130827"/>
<dbReference type="GeneCards" id="SBK3"/>
<dbReference type="HGNC" id="HGNC:44121">
    <property type="gene designation" value="SBK3"/>
</dbReference>
<dbReference type="HPA" id="ENSG00000231274">
    <property type="expression patterns" value="Tissue enhanced (heart muscle, tongue)"/>
</dbReference>
<dbReference type="neXtProt" id="NX_P0C264"/>
<dbReference type="OpenTargets" id="ENSG00000231274"/>
<dbReference type="VEuPathDB" id="HostDB:ENSG00000231274"/>
<dbReference type="eggNOG" id="KOG1345">
    <property type="taxonomic scope" value="Eukaryota"/>
</dbReference>
<dbReference type="GeneTree" id="ENSGT00940000154852"/>
<dbReference type="HOGENOM" id="CLU_000288_10_0_1"/>
<dbReference type="InParanoid" id="P0C264"/>
<dbReference type="OMA" id="RDQYHLI"/>
<dbReference type="OrthoDB" id="6513151at2759"/>
<dbReference type="PAN-GO" id="P0C264">
    <property type="GO annotations" value="1 GO annotation based on evolutionary models"/>
</dbReference>
<dbReference type="PhylomeDB" id="P0C264"/>
<dbReference type="PathwayCommons" id="P0C264"/>
<dbReference type="SignaLink" id="P0C264"/>
<dbReference type="BioGRID-ORCS" id="100130827">
    <property type="hits" value="8 hits in 322 CRISPR screens"/>
</dbReference>
<dbReference type="GenomeRNAi" id="100130827"/>
<dbReference type="Pharos" id="P0C264">
    <property type="development level" value="Tchem"/>
</dbReference>
<dbReference type="PRO" id="PR:P0C264"/>
<dbReference type="Proteomes" id="UP000005640">
    <property type="component" value="Chromosome 19"/>
</dbReference>
<dbReference type="RNAct" id="P0C264">
    <property type="molecule type" value="protein"/>
</dbReference>
<dbReference type="Bgee" id="ENSG00000231274">
    <property type="expression patterns" value="Expressed in right atrium auricular region and 66 other cell types or tissues"/>
</dbReference>
<dbReference type="ExpressionAtlas" id="P0C264">
    <property type="expression patterns" value="baseline and differential"/>
</dbReference>
<dbReference type="GO" id="GO:0005524">
    <property type="term" value="F:ATP binding"/>
    <property type="evidence" value="ECO:0007669"/>
    <property type="project" value="UniProtKB-KW"/>
</dbReference>
<dbReference type="GO" id="GO:0106310">
    <property type="term" value="F:protein serine kinase activity"/>
    <property type="evidence" value="ECO:0007669"/>
    <property type="project" value="RHEA"/>
</dbReference>
<dbReference type="GO" id="GO:0004674">
    <property type="term" value="F:protein serine/threonine kinase activity"/>
    <property type="evidence" value="ECO:0000318"/>
    <property type="project" value="GO_Central"/>
</dbReference>
<dbReference type="FunFam" id="1.10.510.10:FF:000577">
    <property type="entry name" value="SH3 domain binding kinase family member 3"/>
    <property type="match status" value="1"/>
</dbReference>
<dbReference type="FunFam" id="3.30.200.20:FF:000506">
    <property type="entry name" value="SH3 domain binding kinase family member 3"/>
    <property type="match status" value="1"/>
</dbReference>
<dbReference type="Gene3D" id="3.30.200.20">
    <property type="entry name" value="Phosphorylase Kinase, domain 1"/>
    <property type="match status" value="1"/>
</dbReference>
<dbReference type="Gene3D" id="1.10.510.10">
    <property type="entry name" value="Transferase(Phosphotransferase) domain 1"/>
    <property type="match status" value="1"/>
</dbReference>
<dbReference type="InterPro" id="IPR011009">
    <property type="entry name" value="Kinase-like_dom_sf"/>
</dbReference>
<dbReference type="InterPro" id="IPR000719">
    <property type="entry name" value="Prot_kinase_dom"/>
</dbReference>
<dbReference type="InterPro" id="IPR017441">
    <property type="entry name" value="Protein_kinase_ATP_BS"/>
</dbReference>
<dbReference type="InterPro" id="IPR008271">
    <property type="entry name" value="Ser/Thr_kinase_AS"/>
</dbReference>
<dbReference type="PANTHER" id="PTHR24359:SF39">
    <property type="entry name" value="PROTEIN KINASE DOMAIN-CONTAINING PROTEIN"/>
    <property type="match status" value="1"/>
</dbReference>
<dbReference type="PANTHER" id="PTHR24359">
    <property type="entry name" value="SERINE/THREONINE-PROTEIN KINASE SBK1"/>
    <property type="match status" value="1"/>
</dbReference>
<dbReference type="Pfam" id="PF00069">
    <property type="entry name" value="Pkinase"/>
    <property type="match status" value="1"/>
</dbReference>
<dbReference type="SMART" id="SM00220">
    <property type="entry name" value="S_TKc"/>
    <property type="match status" value="1"/>
</dbReference>
<dbReference type="SUPFAM" id="SSF56112">
    <property type="entry name" value="Protein kinase-like (PK-like)"/>
    <property type="match status" value="1"/>
</dbReference>
<dbReference type="PROSITE" id="PS00107">
    <property type="entry name" value="PROTEIN_KINASE_ATP"/>
    <property type="match status" value="1"/>
</dbReference>
<dbReference type="PROSITE" id="PS50011">
    <property type="entry name" value="PROTEIN_KINASE_DOM"/>
    <property type="match status" value="1"/>
</dbReference>
<dbReference type="PROSITE" id="PS00108">
    <property type="entry name" value="PROTEIN_KINASE_ST"/>
    <property type="match status" value="1"/>
</dbReference>
<reference key="1">
    <citation type="journal article" date="2004" name="Nature">
        <title>The DNA sequence and biology of human chromosome 19.</title>
        <authorList>
            <person name="Grimwood J."/>
            <person name="Gordon L.A."/>
            <person name="Olsen A.S."/>
            <person name="Terry A."/>
            <person name="Schmutz J."/>
            <person name="Lamerdin J.E."/>
            <person name="Hellsten U."/>
            <person name="Goodstein D."/>
            <person name="Couronne O."/>
            <person name="Tran-Gyamfi M."/>
            <person name="Aerts A."/>
            <person name="Altherr M."/>
            <person name="Ashworth L."/>
            <person name="Bajorek E."/>
            <person name="Black S."/>
            <person name="Branscomb E."/>
            <person name="Caenepeel S."/>
            <person name="Carrano A.V."/>
            <person name="Caoile C."/>
            <person name="Chan Y.M."/>
            <person name="Christensen M."/>
            <person name="Cleland C.A."/>
            <person name="Copeland A."/>
            <person name="Dalin E."/>
            <person name="Dehal P."/>
            <person name="Denys M."/>
            <person name="Detter J.C."/>
            <person name="Escobar J."/>
            <person name="Flowers D."/>
            <person name="Fotopulos D."/>
            <person name="Garcia C."/>
            <person name="Georgescu A.M."/>
            <person name="Glavina T."/>
            <person name="Gomez M."/>
            <person name="Gonzales E."/>
            <person name="Groza M."/>
            <person name="Hammon N."/>
            <person name="Hawkins T."/>
            <person name="Haydu L."/>
            <person name="Ho I."/>
            <person name="Huang W."/>
            <person name="Israni S."/>
            <person name="Jett J."/>
            <person name="Kadner K."/>
            <person name="Kimball H."/>
            <person name="Kobayashi A."/>
            <person name="Larionov V."/>
            <person name="Leem S.-H."/>
            <person name="Lopez F."/>
            <person name="Lou Y."/>
            <person name="Lowry S."/>
            <person name="Malfatti S."/>
            <person name="Martinez D."/>
            <person name="McCready P.M."/>
            <person name="Medina C."/>
            <person name="Morgan J."/>
            <person name="Nelson K."/>
            <person name="Nolan M."/>
            <person name="Ovcharenko I."/>
            <person name="Pitluck S."/>
            <person name="Pollard M."/>
            <person name="Popkie A.P."/>
            <person name="Predki P."/>
            <person name="Quan G."/>
            <person name="Ramirez L."/>
            <person name="Rash S."/>
            <person name="Retterer J."/>
            <person name="Rodriguez A."/>
            <person name="Rogers S."/>
            <person name="Salamov A."/>
            <person name="Salazar A."/>
            <person name="She X."/>
            <person name="Smith D."/>
            <person name="Slezak T."/>
            <person name="Solovyev V."/>
            <person name="Thayer N."/>
            <person name="Tice H."/>
            <person name="Tsai M."/>
            <person name="Ustaszewska A."/>
            <person name="Vo N."/>
            <person name="Wagner M."/>
            <person name="Wheeler J."/>
            <person name="Wu K."/>
            <person name="Xie G."/>
            <person name="Yang J."/>
            <person name="Dubchak I."/>
            <person name="Furey T.S."/>
            <person name="DeJong P."/>
            <person name="Dickson M."/>
            <person name="Gordon D."/>
            <person name="Eichler E.E."/>
            <person name="Pennacchio L.A."/>
            <person name="Richardson P."/>
            <person name="Stubbs L."/>
            <person name="Rokhsar D.S."/>
            <person name="Myers R.M."/>
            <person name="Rubin E.M."/>
            <person name="Lucas S.M."/>
        </authorList>
    </citation>
    <scope>NUCLEOTIDE SEQUENCE [LARGE SCALE GENOMIC DNA]</scope>
</reference>
<reference key="2">
    <citation type="journal article" date="2002" name="Science">
        <title>The protein kinase complement of the human genome.</title>
        <authorList>
            <person name="Manning G."/>
            <person name="Whyte D.B."/>
            <person name="Martinez R."/>
            <person name="Hunter T."/>
            <person name="Sudarsanam S."/>
        </authorList>
    </citation>
    <scope>IDENTIFICATION</scope>
</reference>
<proteinExistence type="evidence at protein level"/>
<name>SBK3_HUMAN</name>
<feature type="chain" id="PRO_0000262995" description="Uncharacterized serine/threonine-protein kinase SBK3">
    <location>
        <begin position="1"/>
        <end position="359"/>
    </location>
</feature>
<feature type="domain" description="Protein kinase" evidence="1">
    <location>
        <begin position="43"/>
        <end position="309"/>
    </location>
</feature>
<feature type="region of interest" description="Disordered" evidence="3">
    <location>
        <begin position="314"/>
        <end position="359"/>
    </location>
</feature>
<feature type="compositionally biased region" description="Gly residues" evidence="3">
    <location>
        <begin position="350"/>
        <end position="359"/>
    </location>
</feature>
<feature type="active site" description="Proton acceptor" evidence="1 2">
    <location>
        <position position="163"/>
    </location>
</feature>
<feature type="binding site" evidence="1">
    <location>
        <begin position="49"/>
        <end position="57"/>
    </location>
    <ligand>
        <name>ATP</name>
        <dbReference type="ChEBI" id="CHEBI:30616"/>
    </ligand>
</feature>
<feature type="binding site" evidence="1">
    <location>
        <position position="72"/>
    </location>
    <ligand>
        <name>ATP</name>
        <dbReference type="ChEBI" id="CHEBI:30616"/>
    </ligand>
</feature>
<gene>
    <name type="primary">SBK3</name>
    <name type="synonym">SGK110</name>
</gene>
<sequence length="359" mass="38488">MERRASETPEDGDPEEDTATALQRLVELTTSRVTPVRSLRDQYHLIRKLGSGSYGRVLLAQPHQGGPAVALKLLRRDLVLRSTFLREFCVGRCVSAHPGLLQTLAGPLQTPRYFAFAQEYAPCGDLSGMLQERGLPELLVKRVVAQLAGALDFLHSRGLVHADVKPDNVLVFDPVCSRVALGDLGLTRPEGSPTPAPPVPLPTAPPELCLLLPPDTLPLRPAVDSWGLGVLLFCAATACFPWDVALAPNPEFEAFAGWVTTKPQPPQPPPPWDQFAPPALALLQGLLDLDPETRSPPLAVLDFLGDDWGLQGNREGPGVLGSAVSYEDREEGGSSLEEWTDEGDDSKSGGRTGTDGGAP</sequence>
<accession>P0C264</accession>
<organism>
    <name type="scientific">Homo sapiens</name>
    <name type="common">Human</name>
    <dbReference type="NCBI Taxonomy" id="9606"/>
    <lineage>
        <taxon>Eukaryota</taxon>
        <taxon>Metazoa</taxon>
        <taxon>Chordata</taxon>
        <taxon>Craniata</taxon>
        <taxon>Vertebrata</taxon>
        <taxon>Euteleostomi</taxon>
        <taxon>Mammalia</taxon>
        <taxon>Eutheria</taxon>
        <taxon>Euarchontoglires</taxon>
        <taxon>Primates</taxon>
        <taxon>Haplorrhini</taxon>
        <taxon>Catarrhini</taxon>
        <taxon>Hominidae</taxon>
        <taxon>Homo</taxon>
    </lineage>
</organism>
<comment type="catalytic activity">
    <reaction>
        <text>L-seryl-[protein] + ATP = O-phospho-L-seryl-[protein] + ADP + H(+)</text>
        <dbReference type="Rhea" id="RHEA:17989"/>
        <dbReference type="Rhea" id="RHEA-COMP:9863"/>
        <dbReference type="Rhea" id="RHEA-COMP:11604"/>
        <dbReference type="ChEBI" id="CHEBI:15378"/>
        <dbReference type="ChEBI" id="CHEBI:29999"/>
        <dbReference type="ChEBI" id="CHEBI:30616"/>
        <dbReference type="ChEBI" id="CHEBI:83421"/>
        <dbReference type="ChEBI" id="CHEBI:456216"/>
        <dbReference type="EC" id="2.7.11.1"/>
    </reaction>
</comment>
<comment type="catalytic activity">
    <reaction>
        <text>L-threonyl-[protein] + ATP = O-phospho-L-threonyl-[protein] + ADP + H(+)</text>
        <dbReference type="Rhea" id="RHEA:46608"/>
        <dbReference type="Rhea" id="RHEA-COMP:11060"/>
        <dbReference type="Rhea" id="RHEA-COMP:11605"/>
        <dbReference type="ChEBI" id="CHEBI:15378"/>
        <dbReference type="ChEBI" id="CHEBI:30013"/>
        <dbReference type="ChEBI" id="CHEBI:30616"/>
        <dbReference type="ChEBI" id="CHEBI:61977"/>
        <dbReference type="ChEBI" id="CHEBI:456216"/>
        <dbReference type="EC" id="2.7.11.1"/>
    </reaction>
</comment>
<comment type="interaction">
    <interactant intactId="EBI-17181801">
        <id>P0C264</id>
    </interactant>
    <interactant intactId="EBI-745226">
        <id>Q13155</id>
        <label>AIMP2</label>
    </interactant>
    <organismsDiffer>false</organismsDiffer>
    <experiments>3</experiments>
</comment>
<comment type="interaction">
    <interactant intactId="EBI-17181801">
        <id>P0C264</id>
    </interactant>
    <interactant intactId="EBI-10191951">
        <id>O95561</id>
        <label>C1orf105</label>
    </interactant>
    <organismsDiffer>false</organismsDiffer>
    <experiments>3</experiments>
</comment>
<comment type="interaction">
    <interactant intactId="EBI-17181801">
        <id>P0C264</id>
    </interactant>
    <interactant intactId="EBI-2212355">
        <id>Q49AN0</id>
        <label>CRY2</label>
    </interactant>
    <organismsDiffer>false</organismsDiffer>
    <experiments>3</experiments>
</comment>
<comment type="interaction">
    <interactant intactId="EBI-17181801">
        <id>P0C264</id>
    </interactant>
    <interactant intactId="EBI-399105">
        <id>Q9NPF5</id>
        <label>DMAP1</label>
    </interactant>
    <organismsDiffer>false</organismsDiffer>
    <experiments>3</experiments>
</comment>
<comment type="interaction">
    <interactant intactId="EBI-17181801">
        <id>P0C264</id>
    </interactant>
    <interactant intactId="EBI-301735">
        <id>Q13868</id>
        <label>EXOSC2</label>
    </interactant>
    <organismsDiffer>false</organismsDiffer>
    <experiments>3</experiments>
</comment>
<comment type="interaction">
    <interactant intactId="EBI-17181801">
        <id>P0C264</id>
    </interactant>
    <interactant intactId="EBI-923440">
        <id>Q8WXI9</id>
        <label>GATAD2B</label>
    </interactant>
    <organismsDiffer>false</organismsDiffer>
    <experiments>3</experiments>
</comment>
<comment type="interaction">
    <interactant intactId="EBI-17181801">
        <id>P0C264</id>
    </interactant>
    <interactant intactId="EBI-11989378">
        <id>Q8NHZ7</id>
        <label>MBD3L2</label>
    </interactant>
    <organismsDiffer>false</organismsDiffer>
    <experiments>3</experiments>
</comment>
<comment type="interaction">
    <interactant intactId="EBI-17181801">
        <id>P0C264</id>
    </interactant>
    <interactant intactId="EBI-17490746">
        <id>A8MTQ0</id>
        <label>NOTO</label>
    </interactant>
    <organismsDiffer>false</organismsDiffer>
    <experiments>3</experiments>
</comment>
<comment type="interaction">
    <interactant intactId="EBI-17181801">
        <id>P0C264</id>
    </interactant>
    <interactant intactId="EBI-10276663">
        <id>Q8WUT1</id>
        <label>POLDIP3</label>
    </interactant>
    <organismsDiffer>false</organismsDiffer>
    <experiments>3</experiments>
</comment>
<comment type="interaction">
    <interactant intactId="EBI-17181801">
        <id>P0C264</id>
    </interactant>
    <interactant intactId="EBI-347161">
        <id>P84022</id>
        <label>SMAD3</label>
    </interactant>
    <organismsDiffer>false</organismsDiffer>
    <experiments>3</experiments>
</comment>
<comment type="interaction">
    <interactant intactId="EBI-17181801">
        <id>P0C264</id>
    </interactant>
    <interactant intactId="EBI-12938570">
        <id>Q16560-2</id>
        <label>SNRNP35</label>
    </interactant>
    <organismsDiffer>false</organismsDiffer>
    <experiments>3</experiments>
</comment>
<comment type="interaction">
    <interactant intactId="EBI-17181801">
        <id>P0C264</id>
    </interactant>
    <interactant intactId="EBI-12151635">
        <id>P13805-3</id>
        <label>TNNT1</label>
    </interactant>
    <organismsDiffer>false</organismsDiffer>
    <experiments>3</experiments>
</comment>
<comment type="similarity">
    <text evidence="1">Belongs to the protein kinase superfamily. Ser/Thr protein kinase family. STKL subfamily.</text>
</comment>